<accession>O29510</accession>
<feature type="chain" id="PRO_0000127916" description="Uncharacterized protein AF_0748">
    <location>
        <begin position="1"/>
        <end position="299"/>
    </location>
</feature>
<organism>
    <name type="scientific">Archaeoglobus fulgidus (strain ATCC 49558 / DSM 4304 / JCM 9628 / NBRC 100126 / VC-16)</name>
    <dbReference type="NCBI Taxonomy" id="224325"/>
    <lineage>
        <taxon>Archaea</taxon>
        <taxon>Methanobacteriati</taxon>
        <taxon>Methanobacteriota</taxon>
        <taxon>Archaeoglobi</taxon>
        <taxon>Archaeoglobales</taxon>
        <taxon>Archaeoglobaceae</taxon>
        <taxon>Archaeoglobus</taxon>
    </lineage>
</organism>
<proteinExistence type="predicted"/>
<protein>
    <recommendedName>
        <fullName>Uncharacterized protein AF_0748</fullName>
    </recommendedName>
</protein>
<reference key="1">
    <citation type="journal article" date="1997" name="Nature">
        <title>The complete genome sequence of the hyperthermophilic, sulphate-reducing archaeon Archaeoglobus fulgidus.</title>
        <authorList>
            <person name="Klenk H.-P."/>
            <person name="Clayton R.A."/>
            <person name="Tomb J.-F."/>
            <person name="White O."/>
            <person name="Nelson K.E."/>
            <person name="Ketchum K.A."/>
            <person name="Dodson R.J."/>
            <person name="Gwinn M.L."/>
            <person name="Hickey E.K."/>
            <person name="Peterson J.D."/>
            <person name="Richardson D.L."/>
            <person name="Kerlavage A.R."/>
            <person name="Graham D.E."/>
            <person name="Kyrpides N.C."/>
            <person name="Fleischmann R.D."/>
            <person name="Quackenbush J."/>
            <person name="Lee N.H."/>
            <person name="Sutton G.G."/>
            <person name="Gill S.R."/>
            <person name="Kirkness E.F."/>
            <person name="Dougherty B.A."/>
            <person name="McKenney K."/>
            <person name="Adams M.D."/>
            <person name="Loftus B.J."/>
            <person name="Peterson S.N."/>
            <person name="Reich C.I."/>
            <person name="McNeil L.K."/>
            <person name="Badger J.H."/>
            <person name="Glodek A."/>
            <person name="Zhou L."/>
            <person name="Overbeek R."/>
            <person name="Gocayne J.D."/>
            <person name="Weidman J.F."/>
            <person name="McDonald L.A."/>
            <person name="Utterback T.R."/>
            <person name="Cotton M.D."/>
            <person name="Spriggs T."/>
            <person name="Artiach P."/>
            <person name="Kaine B.P."/>
            <person name="Sykes S.M."/>
            <person name="Sadow P.W."/>
            <person name="D'Andrea K.P."/>
            <person name="Bowman C."/>
            <person name="Fujii C."/>
            <person name="Garland S.A."/>
            <person name="Mason T.M."/>
            <person name="Olsen G.J."/>
            <person name="Fraser C.M."/>
            <person name="Smith H.O."/>
            <person name="Woese C.R."/>
            <person name="Venter J.C."/>
        </authorList>
    </citation>
    <scope>NUCLEOTIDE SEQUENCE [LARGE SCALE GENOMIC DNA]</scope>
    <source>
        <strain>ATCC 49558 / DSM 4304 / JCM 9628 / NBRC 100126 / VC-16</strain>
    </source>
</reference>
<sequence>MKVGIVLNPHAGGGFDDLKRRVVVRVLKKLDGEFVTADKVAELLGIEAERVKVKETNTRLDTVNLVKALDGNVDVIAVFGGDGTVSDAASAKPQTPLLCIGIGTTNVSPALCPPDFDRLEEVEMRGLVVKFGGEERVAFNDVVVGSTILSTVDGKRVQVDARRYMRGEKVIATPRKFRARVEVGERVVEGVFGNIFVAMTDRRFLGKGIAGGASLSAFLGFKGVVACVSEGIVVSTYTKEDLRRVEPIVTSTISFDDEVVKIDADEVVSCDGNPLGVGRAEVAIEDGVVRVLKPFKEEE</sequence>
<name>Y748_ARCFU</name>
<dbReference type="EMBL" id="AE000782">
    <property type="protein sequence ID" value="AAB90498.1"/>
    <property type="molecule type" value="Genomic_DNA"/>
</dbReference>
<dbReference type="PIR" id="D69343">
    <property type="entry name" value="D69343"/>
</dbReference>
<dbReference type="RefSeq" id="WP_010878251.1">
    <property type="nucleotide sequence ID" value="NC_000917.1"/>
</dbReference>
<dbReference type="SMR" id="O29510"/>
<dbReference type="STRING" id="224325.AF_0748"/>
<dbReference type="PaxDb" id="224325-AF_0748"/>
<dbReference type="EnsemblBacteria" id="AAB90498">
    <property type="protein sequence ID" value="AAB90498"/>
    <property type="gene ID" value="AF_0748"/>
</dbReference>
<dbReference type="KEGG" id="afu:AF_0748"/>
<dbReference type="eggNOG" id="arCOG01348">
    <property type="taxonomic scope" value="Archaea"/>
</dbReference>
<dbReference type="HOGENOM" id="CLU_929381_0_0_2"/>
<dbReference type="OrthoDB" id="45424at2157"/>
<dbReference type="Proteomes" id="UP000002199">
    <property type="component" value="Chromosome"/>
</dbReference>
<dbReference type="GO" id="GO:0003951">
    <property type="term" value="F:NAD+ kinase activity"/>
    <property type="evidence" value="ECO:0007669"/>
    <property type="project" value="InterPro"/>
</dbReference>
<dbReference type="GO" id="GO:0006741">
    <property type="term" value="P:NADP biosynthetic process"/>
    <property type="evidence" value="ECO:0007669"/>
    <property type="project" value="InterPro"/>
</dbReference>
<dbReference type="Gene3D" id="3.40.50.10330">
    <property type="entry name" value="Probable inorganic polyphosphate/atp-NAD kinase, domain 1"/>
    <property type="match status" value="1"/>
</dbReference>
<dbReference type="InterPro" id="IPR017438">
    <property type="entry name" value="ATP-NAD_kinase_N"/>
</dbReference>
<dbReference type="InterPro" id="IPR016064">
    <property type="entry name" value="NAD/diacylglycerol_kinase_sf"/>
</dbReference>
<dbReference type="InterPro" id="IPR002504">
    <property type="entry name" value="NADK"/>
</dbReference>
<dbReference type="Pfam" id="PF01513">
    <property type="entry name" value="NAD_kinase"/>
    <property type="match status" value="1"/>
</dbReference>
<dbReference type="SUPFAM" id="SSF111331">
    <property type="entry name" value="NAD kinase/diacylglycerol kinase-like"/>
    <property type="match status" value="1"/>
</dbReference>
<gene>
    <name type="ordered locus">AF_0748</name>
</gene>
<keyword id="KW-1185">Reference proteome</keyword>